<evidence type="ECO:0000250" key="1"/>
<evidence type="ECO:0000305" key="2"/>
<protein>
    <recommendedName>
        <fullName evidence="2">Small ribosomal subunit protein uS7c</fullName>
    </recommendedName>
    <alternativeName>
        <fullName>30S ribosomal protein S7, chloroplastic</fullName>
    </alternativeName>
</protein>
<reference key="1">
    <citation type="journal article" date="2000" name="Curr. Genet.">
        <title>Evolutionary significance of an unusual chloroplast DNA inversion found in two basal angiosperm lineages.</title>
        <authorList>
            <person name="Graham S.W."/>
            <person name="Olmstead R.G."/>
        </authorList>
    </citation>
    <scope>NUCLEOTIDE SEQUENCE [GENOMIC DNA]</scope>
</reference>
<comment type="function">
    <text evidence="1">One of the primary rRNA binding proteins, it binds directly to 16S rRNA where it nucleates assembly of the head domain of the 30S subunit.</text>
</comment>
<comment type="subunit">
    <text>Part of the 30S ribosomal subunit.</text>
</comment>
<comment type="subcellular location">
    <subcellularLocation>
        <location>Plastid</location>
        <location>Chloroplast</location>
    </subcellularLocation>
</comment>
<comment type="similarity">
    <text evidence="2">Belongs to the universal ribosomal protein uS7 family.</text>
</comment>
<sequence>MSRRSTAEKETAKSDPIYRNRLVNMLVNRILRHGKKSLAYRILYRAMKNIQQKTEKNPLSVLRQAIRGVTPNVTVKARRVGGSTYQVPIEIRSTQGKALAIRWSLGASRKRPPGRNMAFKLSYELMDAARENGNAIRKKEETHRMAEANRAFAHFR</sequence>
<proteinExistence type="inferred from homology"/>
<feature type="chain" id="PRO_0000124517" description="Small ribosomal subunit protein uS7c">
    <location>
        <begin position="1"/>
        <end position="156"/>
    </location>
</feature>
<geneLocation type="chloroplast"/>
<accession>Q9MSQ3</accession>
<name>RR7_ZAMFU</name>
<keyword id="KW-0150">Chloroplast</keyword>
<keyword id="KW-0934">Plastid</keyword>
<keyword id="KW-0687">Ribonucleoprotein</keyword>
<keyword id="KW-0689">Ribosomal protein</keyword>
<keyword id="KW-0694">RNA-binding</keyword>
<keyword id="KW-0699">rRNA-binding</keyword>
<organism>
    <name type="scientific">Zamia furfuracea</name>
    <name type="common">Cardboard cycad</name>
    <name type="synonym">Jamaican sago tree</name>
    <dbReference type="NCBI Taxonomy" id="42329"/>
    <lineage>
        <taxon>Eukaryota</taxon>
        <taxon>Viridiplantae</taxon>
        <taxon>Streptophyta</taxon>
        <taxon>Embryophyta</taxon>
        <taxon>Tracheophyta</taxon>
        <taxon>Spermatophyta</taxon>
        <taxon>Cycadidae</taxon>
        <taxon>Cycadales</taxon>
        <taxon>Zamiaceae</taxon>
        <taxon>Zamia</taxon>
    </lineage>
</organism>
<gene>
    <name type="primary">rps7</name>
</gene>
<dbReference type="EMBL" id="AF188850">
    <property type="protein sequence ID" value="AAF73307.1"/>
    <property type="molecule type" value="Genomic_DNA"/>
</dbReference>
<dbReference type="RefSeq" id="YP_009113773.1">
    <property type="nucleotide sequence ID" value="NC_026040.1"/>
</dbReference>
<dbReference type="RefSeq" id="YP_009113788.1">
    <property type="nucleotide sequence ID" value="NC_026040.1"/>
</dbReference>
<dbReference type="SMR" id="Q9MSQ3"/>
<dbReference type="GeneID" id="22832251"/>
<dbReference type="GeneID" id="22832316"/>
<dbReference type="GO" id="GO:0009507">
    <property type="term" value="C:chloroplast"/>
    <property type="evidence" value="ECO:0007669"/>
    <property type="project" value="UniProtKB-SubCell"/>
</dbReference>
<dbReference type="GO" id="GO:0015935">
    <property type="term" value="C:small ribosomal subunit"/>
    <property type="evidence" value="ECO:0007669"/>
    <property type="project" value="InterPro"/>
</dbReference>
<dbReference type="GO" id="GO:0019843">
    <property type="term" value="F:rRNA binding"/>
    <property type="evidence" value="ECO:0007669"/>
    <property type="project" value="UniProtKB-UniRule"/>
</dbReference>
<dbReference type="GO" id="GO:0003735">
    <property type="term" value="F:structural constituent of ribosome"/>
    <property type="evidence" value="ECO:0007669"/>
    <property type="project" value="InterPro"/>
</dbReference>
<dbReference type="GO" id="GO:0006412">
    <property type="term" value="P:translation"/>
    <property type="evidence" value="ECO:0007669"/>
    <property type="project" value="UniProtKB-UniRule"/>
</dbReference>
<dbReference type="CDD" id="cd14871">
    <property type="entry name" value="uS7_Chloroplast"/>
    <property type="match status" value="1"/>
</dbReference>
<dbReference type="FunFam" id="1.10.455.10:FF:000001">
    <property type="entry name" value="30S ribosomal protein S7"/>
    <property type="match status" value="1"/>
</dbReference>
<dbReference type="Gene3D" id="1.10.455.10">
    <property type="entry name" value="Ribosomal protein S7 domain"/>
    <property type="match status" value="1"/>
</dbReference>
<dbReference type="HAMAP" id="MF_00480_B">
    <property type="entry name" value="Ribosomal_uS7_B"/>
    <property type="match status" value="1"/>
</dbReference>
<dbReference type="InterPro" id="IPR000235">
    <property type="entry name" value="Ribosomal_uS7"/>
</dbReference>
<dbReference type="InterPro" id="IPR005717">
    <property type="entry name" value="Ribosomal_uS7_bac/org-type"/>
</dbReference>
<dbReference type="InterPro" id="IPR020606">
    <property type="entry name" value="Ribosomal_uS7_CS"/>
</dbReference>
<dbReference type="InterPro" id="IPR023798">
    <property type="entry name" value="Ribosomal_uS7_dom"/>
</dbReference>
<dbReference type="InterPro" id="IPR036823">
    <property type="entry name" value="Ribosomal_uS7_dom_sf"/>
</dbReference>
<dbReference type="NCBIfam" id="TIGR01029">
    <property type="entry name" value="rpsG_bact"/>
    <property type="match status" value="1"/>
</dbReference>
<dbReference type="PANTHER" id="PTHR11205">
    <property type="entry name" value="RIBOSOMAL PROTEIN S7"/>
    <property type="match status" value="1"/>
</dbReference>
<dbReference type="Pfam" id="PF00177">
    <property type="entry name" value="Ribosomal_S7"/>
    <property type="match status" value="1"/>
</dbReference>
<dbReference type="PIRSF" id="PIRSF002122">
    <property type="entry name" value="RPS7p_RPS7a_RPS5e_RPS7o"/>
    <property type="match status" value="1"/>
</dbReference>
<dbReference type="SUPFAM" id="SSF47973">
    <property type="entry name" value="Ribosomal protein S7"/>
    <property type="match status" value="1"/>
</dbReference>
<dbReference type="PROSITE" id="PS00052">
    <property type="entry name" value="RIBOSOMAL_S7"/>
    <property type="match status" value="1"/>
</dbReference>